<dbReference type="EMBL" id="AF231410">
    <property type="protein sequence ID" value="AAG59586.1"/>
    <property type="molecule type" value="mRNA"/>
</dbReference>
<dbReference type="EMBL" id="CH471052">
    <property type="protein sequence ID" value="EAW79382.1"/>
    <property type="molecule type" value="Genomic_DNA"/>
</dbReference>
<dbReference type="EMBL" id="CH471052">
    <property type="protein sequence ID" value="EAW79383.1"/>
    <property type="molecule type" value="Genomic_DNA"/>
</dbReference>
<dbReference type="EMBL" id="BC015413">
    <property type="protein sequence ID" value="AAH15413.1"/>
    <property type="molecule type" value="mRNA"/>
</dbReference>
<dbReference type="EMBL" id="BC141849">
    <property type="protein sequence ID" value="AAI41850.1"/>
    <property type="molecule type" value="mRNA"/>
</dbReference>
<dbReference type="CCDS" id="CCDS33841.1">
    <molecule id="Q9BZX4-1"/>
</dbReference>
<dbReference type="RefSeq" id="NP_001012337.1">
    <molecule id="Q9BZX4-1"/>
    <property type="nucleotide sequence ID" value="NM_001012337.3"/>
</dbReference>
<dbReference type="RefSeq" id="NP_001295242.1">
    <molecule id="Q9BZX4-1"/>
    <property type="nucleotide sequence ID" value="NM_001308313.2"/>
</dbReference>
<dbReference type="RefSeq" id="XP_005247195.1">
    <molecule id="Q9BZX4-2"/>
    <property type="nucleotide sequence ID" value="XM_005247138.4"/>
</dbReference>
<dbReference type="RefSeq" id="XP_006713576.1">
    <molecule id="Q9BZX4-1"/>
    <property type="nucleotide sequence ID" value="XM_006713513.4"/>
</dbReference>
<dbReference type="RefSeq" id="XP_054201333.1">
    <molecule id="Q9BZX4-1"/>
    <property type="nucleotide sequence ID" value="XM_054345358.1"/>
</dbReference>
<dbReference type="RefSeq" id="XP_054201334.1">
    <molecule id="Q9BZX4-2"/>
    <property type="nucleotide sequence ID" value="XM_054345359.1"/>
</dbReference>
<dbReference type="SMR" id="Q9BZX4"/>
<dbReference type="BioGRID" id="127418">
    <property type="interactions" value="1"/>
</dbReference>
<dbReference type="FunCoup" id="Q9BZX4">
    <property type="interactions" value="5"/>
</dbReference>
<dbReference type="IntAct" id="Q9BZX4">
    <property type="interactions" value="2"/>
</dbReference>
<dbReference type="STRING" id="9606.ENSP00000426271"/>
<dbReference type="PhosphoSitePlus" id="Q9BZX4"/>
<dbReference type="BioMuta" id="ROPN1B"/>
<dbReference type="DMDM" id="74717806"/>
<dbReference type="MassIVE" id="Q9BZX4"/>
<dbReference type="PaxDb" id="9606-ENSP00000426271"/>
<dbReference type="PeptideAtlas" id="Q9BZX4"/>
<dbReference type="ProteomicsDB" id="79919">
    <molecule id="Q9BZX4-1"/>
</dbReference>
<dbReference type="ProteomicsDB" id="79920">
    <molecule id="Q9BZX4-2"/>
</dbReference>
<dbReference type="Antibodypedia" id="33037">
    <property type="antibodies" value="82 antibodies from 21 providers"/>
</dbReference>
<dbReference type="DNASU" id="152015"/>
<dbReference type="Ensembl" id="ENST00000251776.8">
    <molecule id="Q9BZX4-1"/>
    <property type="protein sequence ID" value="ENSP00000251776.4"/>
    <property type="gene ID" value="ENSG00000114547.10"/>
</dbReference>
<dbReference type="Ensembl" id="ENST00000505382.5">
    <molecule id="Q9BZX4-2"/>
    <property type="protein sequence ID" value="ENSP00000421662.1"/>
    <property type="gene ID" value="ENSG00000114547.10"/>
</dbReference>
<dbReference type="Ensembl" id="ENST00000511082.1">
    <molecule id="Q9BZX4-2"/>
    <property type="protein sequence ID" value="ENSP00000424447.1"/>
    <property type="gene ID" value="ENSG00000114547.10"/>
</dbReference>
<dbReference type="Ensembl" id="ENST00000514116.6">
    <molecule id="Q9BZX4-1"/>
    <property type="protein sequence ID" value="ENSP00000426271.1"/>
    <property type="gene ID" value="ENSG00000114547.10"/>
</dbReference>
<dbReference type="GeneID" id="152015"/>
<dbReference type="KEGG" id="hsa:152015"/>
<dbReference type="MANE-Select" id="ENST00000514116.6">
    <property type="protein sequence ID" value="ENSP00000426271.1"/>
    <property type="RefSeq nucleotide sequence ID" value="NM_001308313.2"/>
    <property type="RefSeq protein sequence ID" value="NP_001295242.1"/>
</dbReference>
<dbReference type="UCSC" id="uc003eih.4">
    <molecule id="Q9BZX4-1"/>
    <property type="organism name" value="human"/>
</dbReference>
<dbReference type="AGR" id="HGNC:31927"/>
<dbReference type="CTD" id="152015"/>
<dbReference type="DisGeNET" id="152015"/>
<dbReference type="GeneCards" id="ROPN1B"/>
<dbReference type="HGNC" id="HGNC:31927">
    <property type="gene designation" value="ROPN1B"/>
</dbReference>
<dbReference type="HPA" id="ENSG00000114547">
    <property type="expression patterns" value="Tissue enriched (testis)"/>
</dbReference>
<dbReference type="MIM" id="611757">
    <property type="type" value="gene"/>
</dbReference>
<dbReference type="neXtProt" id="NX_Q9BZX4"/>
<dbReference type="OpenTargets" id="ENSG00000114547"/>
<dbReference type="PharmGKB" id="PA142671053"/>
<dbReference type="VEuPathDB" id="HostDB:ENSG00000114547"/>
<dbReference type="eggNOG" id="ENOG502R2JI">
    <property type="taxonomic scope" value="Eukaryota"/>
</dbReference>
<dbReference type="GeneTree" id="ENSGT00390000012731"/>
<dbReference type="HOGENOM" id="CLU_069829_1_0_1"/>
<dbReference type="InParanoid" id="Q9BZX4"/>
<dbReference type="OMA" id="QWASDYF"/>
<dbReference type="OrthoDB" id="10067602at2759"/>
<dbReference type="PAN-GO" id="Q9BZX4">
    <property type="GO annotations" value="3 GO annotations based on evolutionary models"/>
</dbReference>
<dbReference type="PhylomeDB" id="Q9BZX4"/>
<dbReference type="TreeFam" id="TF105421"/>
<dbReference type="PathwayCommons" id="Q9BZX4"/>
<dbReference type="SignaLink" id="Q9BZX4"/>
<dbReference type="BioGRID-ORCS" id="152015">
    <property type="hits" value="18 hits in 1140 CRISPR screens"/>
</dbReference>
<dbReference type="GenomeRNAi" id="152015"/>
<dbReference type="Pharos" id="Q9BZX4">
    <property type="development level" value="Tbio"/>
</dbReference>
<dbReference type="PRO" id="PR:Q9BZX4"/>
<dbReference type="Proteomes" id="UP000005640">
    <property type="component" value="Chromosome 3"/>
</dbReference>
<dbReference type="RNAct" id="Q9BZX4">
    <property type="molecule type" value="protein"/>
</dbReference>
<dbReference type="Bgee" id="ENSG00000114547">
    <property type="expression patterns" value="Expressed in left testis and 96 other cell types or tissues"/>
</dbReference>
<dbReference type="ExpressionAtlas" id="Q9BZX4">
    <property type="expression patterns" value="baseline and differential"/>
</dbReference>
<dbReference type="GO" id="GO:0005737">
    <property type="term" value="C:cytoplasm"/>
    <property type="evidence" value="ECO:0000314"/>
    <property type="project" value="UniProtKB"/>
</dbReference>
<dbReference type="GO" id="GO:0031514">
    <property type="term" value="C:motile cilium"/>
    <property type="evidence" value="ECO:0000314"/>
    <property type="project" value="UniProtKB"/>
</dbReference>
<dbReference type="GO" id="GO:0046982">
    <property type="term" value="F:protein heterodimerization activity"/>
    <property type="evidence" value="ECO:0000353"/>
    <property type="project" value="UniProtKB"/>
</dbReference>
<dbReference type="GO" id="GO:0030159">
    <property type="term" value="F:signaling receptor complex adaptor activity"/>
    <property type="evidence" value="ECO:0000303"/>
    <property type="project" value="UniProtKB"/>
</dbReference>
<dbReference type="GO" id="GO:0007340">
    <property type="term" value="P:acrosome reaction"/>
    <property type="evidence" value="ECO:0000303"/>
    <property type="project" value="UniProtKB"/>
</dbReference>
<dbReference type="GO" id="GO:0098609">
    <property type="term" value="P:cell-cell adhesion"/>
    <property type="evidence" value="ECO:0000303"/>
    <property type="project" value="UniProtKB"/>
</dbReference>
<dbReference type="GO" id="GO:0044782">
    <property type="term" value="P:cilium organization"/>
    <property type="evidence" value="ECO:0000250"/>
    <property type="project" value="UniProtKB"/>
</dbReference>
<dbReference type="GO" id="GO:0061640">
    <property type="term" value="P:cytoskeleton-dependent cytokinesis"/>
    <property type="evidence" value="ECO:0000303"/>
    <property type="project" value="UniProtKB"/>
</dbReference>
<dbReference type="GO" id="GO:0030317">
    <property type="term" value="P:flagellated sperm motility"/>
    <property type="evidence" value="ECO:0000250"/>
    <property type="project" value="UniProtKB"/>
</dbReference>
<dbReference type="GO" id="GO:0007342">
    <property type="term" value="P:fusion of sperm to egg plasma membrane involved in single fertilization"/>
    <property type="evidence" value="ECO:0000303"/>
    <property type="project" value="UniProtKB"/>
</dbReference>
<dbReference type="GO" id="GO:0061512">
    <property type="term" value="P:protein localization to cilium"/>
    <property type="evidence" value="ECO:0000250"/>
    <property type="project" value="UniProtKB"/>
</dbReference>
<dbReference type="GO" id="GO:0001932">
    <property type="term" value="P:regulation of protein phosphorylation"/>
    <property type="evidence" value="ECO:0000250"/>
    <property type="project" value="UniProtKB"/>
</dbReference>
<dbReference type="GO" id="GO:0007266">
    <property type="term" value="P:Rho protein signal transduction"/>
    <property type="evidence" value="ECO:0000304"/>
    <property type="project" value="UniProtKB"/>
</dbReference>
<dbReference type="GO" id="GO:0048240">
    <property type="term" value="P:sperm capacitation"/>
    <property type="evidence" value="ECO:0000250"/>
    <property type="project" value="UniProtKB"/>
</dbReference>
<dbReference type="GO" id="GO:0007283">
    <property type="term" value="P:spermatogenesis"/>
    <property type="evidence" value="ECO:0000303"/>
    <property type="project" value="UniProtKB"/>
</dbReference>
<dbReference type="CDD" id="cd23019">
    <property type="entry name" value="DD_ROP"/>
    <property type="match status" value="1"/>
</dbReference>
<dbReference type="FunFam" id="1.20.890.10:FF:000004">
    <property type="entry name" value="ropporin-1-like protein isoform X2"/>
    <property type="match status" value="1"/>
</dbReference>
<dbReference type="Gene3D" id="1.20.890.10">
    <property type="entry name" value="cAMP-dependent protein kinase regulatory subunit, dimerization-anchoring domain"/>
    <property type="match status" value="1"/>
</dbReference>
<dbReference type="InterPro" id="IPR047844">
    <property type="entry name" value="ROP_DD"/>
</dbReference>
<dbReference type="PANTHER" id="PTHR14952">
    <property type="entry name" value="ROPPORIN-1-LIKE PROTEIN"/>
    <property type="match status" value="1"/>
</dbReference>
<dbReference type="PANTHER" id="PTHR14952:SF12">
    <property type="entry name" value="ROPPORIN-1B"/>
    <property type="match status" value="1"/>
</dbReference>
<dbReference type="SUPFAM" id="SSF47391">
    <property type="entry name" value="Dimerization-anchoring domain of cAMP-dependent PK regulatory subunit"/>
    <property type="match status" value="1"/>
</dbReference>
<gene>
    <name type="primary">ROPN1B</name>
</gene>
<proteinExistence type="evidence at protein level"/>
<keyword id="KW-0025">Alternative splicing</keyword>
<keyword id="KW-0966">Cell projection</keyword>
<keyword id="KW-0969">Cilium</keyword>
<keyword id="KW-0282">Flagellum</keyword>
<keyword id="KW-0597">Phosphoprotein</keyword>
<keyword id="KW-1267">Proteomics identification</keyword>
<keyword id="KW-1185">Reference proteome</keyword>
<keyword id="KW-0832">Ubl conjugation</keyword>
<evidence type="ECO:0000250" key="1"/>
<evidence type="ECO:0000250" key="2">
    <source>
        <dbReference type="UniProtKB" id="Q4KLL5"/>
    </source>
</evidence>
<evidence type="ECO:0000250" key="3">
    <source>
        <dbReference type="UniProtKB" id="Q9ESG2"/>
    </source>
</evidence>
<evidence type="ECO:0000250" key="4">
    <source>
        <dbReference type="UniProtKB" id="Q9HAT0"/>
    </source>
</evidence>
<evidence type="ECO:0000269" key="5">
    <source>
    </source>
</evidence>
<evidence type="ECO:0000303" key="6">
    <source>
    </source>
</evidence>
<evidence type="ECO:0000305" key="7"/>
<name>ROP1B_HUMAN</name>
<comment type="function">
    <text evidence="3">Important for male fertility. With ROPN1L, involved in fibrous sheath integrity and sperm motility, plays a role in PKA-dependent signaling processes required for spermatozoa capacitation.</text>
</comment>
<comment type="subunit">
    <text evidence="3 4 5">Homodimer. Interacts with RHPN1 (By similarity). May interact with SPA17 (By similarity). Interacts with AKAP3 (PubMed:11278869). Interacts with FSCB; the interaction increases upon spermatozoa capacitation conditions (By similarity).</text>
</comment>
<comment type="interaction">
    <interactant intactId="EBI-9033148">
        <id>Q9BZX4</id>
    </interactant>
    <interactant intactId="EBI-9033101">
        <id>O75969</id>
        <label>AKAP3</label>
    </interactant>
    <organismsDiffer>false</organismsDiffer>
    <experiments>2</experiments>
</comment>
<comment type="subcellular location">
    <subcellularLocation>
        <location evidence="3">Cell projection</location>
        <location evidence="3">Cilium</location>
        <location evidence="3">Flagellum</location>
    </subcellularLocation>
    <text evidence="3">In the sperm tail, found in the principal piece and in the cytoplasmic droplet located at the distal end of the midpiece. Inner surface of the fibrous sheath.</text>
</comment>
<comment type="alternative products">
    <event type="alternative splicing"/>
    <isoform>
        <id>Q9BZX4-1</id>
        <name>1</name>
        <sequence type="displayed"/>
    </isoform>
    <isoform>
        <id>Q9BZX4-2</id>
        <name>2</name>
        <sequence type="described" ref="VSP_028745"/>
    </isoform>
</comment>
<comment type="domain">
    <text>The RIIa domain mediates interaction with AKAP3.</text>
</comment>
<comment type="PTM">
    <text evidence="3">Sumoylated, sumoylation decreases upon spermatozoa capacitation conditions.</text>
</comment>
<comment type="miscellaneous">
    <text>'Ropporin' comes from the Japanese word 'oppo' which means 'tail'.</text>
</comment>
<comment type="similarity">
    <text evidence="7">Belongs to the ropporin family.</text>
</comment>
<feature type="chain" id="PRO_0000307393" description="Ropporin-1B">
    <location>
        <begin position="1"/>
        <end position="212"/>
    </location>
</feature>
<feature type="domain" description="RIIa">
    <location>
        <begin position="12"/>
        <end position="49"/>
    </location>
</feature>
<feature type="region of interest" description="Interaction with RHPN1" evidence="1">
    <location>
        <begin position="209"/>
        <end position="212"/>
    </location>
</feature>
<feature type="modified residue" description="Phosphoserine" evidence="2">
    <location>
        <position position="56"/>
    </location>
</feature>
<feature type="splice variant" id="VSP_028745" description="In isoform 2." evidence="6">
    <location>
        <begin position="1"/>
        <end position="92"/>
    </location>
</feature>
<feature type="mutagenesis site" description="Abolishes interaction with AKAP3." evidence="5">
    <original>L</original>
    <variation>A</variation>
    <location>
        <position position="18"/>
    </location>
</feature>
<accession>Q9BZX4</accession>
<accession>D3DNA6</accession>
<accession>Q96BM7</accession>
<sequence length="212" mass="23964">MAQTDKPTCIPPELPKMLKEFAKAAIRAQPQDLIQWGADYFEALSRGETPPVRERSERVALCNWAELTPELLKILHSQVAGRLIIRAEELAQMWKVVNLPTDLFNSVMNVGRFTEEIEWLKFLALACSALGVTITKTLKIVCEVLSCDHNGGLPRIPFSTFQFLYTYIAEVDGEICASHVSRMLNYIEQEVIGPDGLITVNDFTQNPRVWLE</sequence>
<reference key="1">
    <citation type="journal article" date="2001" name="J. Biol. Chem.">
        <title>Identification of sperm-specific proteins that interact with A-kinase anchoring proteins in a manner similar to the type II regulatory subunit of PKA.</title>
        <authorList>
            <person name="Carr D.W."/>
            <person name="Fujita A."/>
            <person name="Stentz C.L."/>
            <person name="Liberty G.A."/>
            <person name="Olson G.E."/>
            <person name="Narumiya S."/>
        </authorList>
    </citation>
    <scope>NUCLEOTIDE SEQUENCE [MRNA] (ISOFORM 1)</scope>
    <scope>INTERACTION WITH AKAP3</scope>
    <scope>MUTAGENESIS OF LEU-18</scope>
    <source>
        <tissue>Testis</tissue>
    </source>
</reference>
<reference key="2">
    <citation type="submission" date="2005-09" db="EMBL/GenBank/DDBJ databases">
        <authorList>
            <person name="Mural R.J."/>
            <person name="Istrail S."/>
            <person name="Sutton G.G."/>
            <person name="Florea L."/>
            <person name="Halpern A.L."/>
            <person name="Mobarry C.M."/>
            <person name="Lippert R."/>
            <person name="Walenz B."/>
            <person name="Shatkay H."/>
            <person name="Dew I."/>
            <person name="Miller J.R."/>
            <person name="Flanigan M.J."/>
            <person name="Edwards N.J."/>
            <person name="Bolanos R."/>
            <person name="Fasulo D."/>
            <person name="Halldorsson B.V."/>
            <person name="Hannenhalli S."/>
            <person name="Turner R."/>
            <person name="Yooseph S."/>
            <person name="Lu F."/>
            <person name="Nusskern D.R."/>
            <person name="Shue B.C."/>
            <person name="Zheng X.H."/>
            <person name="Zhong F."/>
            <person name="Delcher A.L."/>
            <person name="Huson D.H."/>
            <person name="Kravitz S.A."/>
            <person name="Mouchard L."/>
            <person name="Reinert K."/>
            <person name="Remington K.A."/>
            <person name="Clark A.G."/>
            <person name="Waterman M.S."/>
            <person name="Eichler E.E."/>
            <person name="Adams M.D."/>
            <person name="Hunkapiller M.W."/>
            <person name="Myers E.W."/>
            <person name="Venter J.C."/>
        </authorList>
    </citation>
    <scope>NUCLEOTIDE SEQUENCE [LARGE SCALE GENOMIC DNA]</scope>
</reference>
<reference key="3">
    <citation type="journal article" date="2004" name="Genome Res.">
        <title>The status, quality, and expansion of the NIH full-length cDNA project: the Mammalian Gene Collection (MGC).</title>
        <authorList>
            <consortium name="The MGC Project Team"/>
        </authorList>
    </citation>
    <scope>NUCLEOTIDE SEQUENCE [LARGE SCALE MRNA] (ISOFORMS 1 AND 2)</scope>
    <source>
        <tissue>Mammary gland</tissue>
    </source>
</reference>
<organism>
    <name type="scientific">Homo sapiens</name>
    <name type="common">Human</name>
    <dbReference type="NCBI Taxonomy" id="9606"/>
    <lineage>
        <taxon>Eukaryota</taxon>
        <taxon>Metazoa</taxon>
        <taxon>Chordata</taxon>
        <taxon>Craniata</taxon>
        <taxon>Vertebrata</taxon>
        <taxon>Euteleostomi</taxon>
        <taxon>Mammalia</taxon>
        <taxon>Eutheria</taxon>
        <taxon>Euarchontoglires</taxon>
        <taxon>Primates</taxon>
        <taxon>Haplorrhini</taxon>
        <taxon>Catarrhini</taxon>
        <taxon>Hominidae</taxon>
        <taxon>Homo</taxon>
    </lineage>
</organism>
<protein>
    <recommendedName>
        <fullName>Ropporin-1B</fullName>
    </recommendedName>
    <alternativeName>
        <fullName>Rhophilin-associated protein 1B</fullName>
    </alternativeName>
</protein>